<sequence>MTMKQPVRVAVTGAAGQIGYSLLFRIAAGDMLGQDQPVILQLLEITPALKALNGVVMELRDGAFPLLADVITSDDPMVAFKDADYALLVGAMPRKAGMERGDLLGANGGIFKPQGEALGAVASRNVKVLVVGNPANTNALIAQQNAPDLDPKCFTAMVRLDHNRALSQLAEKTGAAVSDIKNVTIWGNHSSTQYPDLSQATVNGKPALEQVDRTWYENDYIPTVAKRGAAIIEARGASSAASAASAAIDHMHDWALGTKDGEWVSMGIPSDGSYGIPEGLIYGFPVRVKDGKYEIVQGLDVSDFSRGKMDATAQELEEERDEVRKLGLVK</sequence>
<protein>
    <recommendedName>
        <fullName evidence="1">Malate dehydrogenase</fullName>
        <ecNumber evidence="1">1.1.1.37</ecNumber>
    </recommendedName>
</protein>
<organism>
    <name type="scientific">Deinococcus radiodurans (strain ATCC 13939 / DSM 20539 / JCM 16871 / CCUG 27074 / LMG 4051 / NBRC 15346 / NCIMB 9279 / VKM B-1422 / R1)</name>
    <dbReference type="NCBI Taxonomy" id="243230"/>
    <lineage>
        <taxon>Bacteria</taxon>
        <taxon>Thermotogati</taxon>
        <taxon>Deinococcota</taxon>
        <taxon>Deinococci</taxon>
        <taxon>Deinococcales</taxon>
        <taxon>Deinococcaceae</taxon>
        <taxon>Deinococcus</taxon>
    </lineage>
</organism>
<accession>Q9RXI8</accession>
<proteinExistence type="inferred from homology"/>
<gene>
    <name evidence="1" type="primary">mdh</name>
    <name type="ordered locus">DR_0325</name>
</gene>
<keyword id="KW-0520">NAD</keyword>
<keyword id="KW-0560">Oxidoreductase</keyword>
<keyword id="KW-1185">Reference proteome</keyword>
<keyword id="KW-0816">Tricarboxylic acid cycle</keyword>
<feature type="chain" id="PRO_0000113368" description="Malate dehydrogenase">
    <location>
        <begin position="1"/>
        <end position="330"/>
    </location>
</feature>
<feature type="active site" description="Proton acceptor" evidence="1">
    <location>
        <position position="189"/>
    </location>
</feature>
<feature type="binding site" evidence="1">
    <location>
        <begin position="13"/>
        <end position="19"/>
    </location>
    <ligand>
        <name>NAD(+)</name>
        <dbReference type="ChEBI" id="CHEBI:57540"/>
    </ligand>
</feature>
<feature type="binding site" evidence="1">
    <location>
        <position position="94"/>
    </location>
    <ligand>
        <name>substrate</name>
    </ligand>
</feature>
<feature type="binding site" evidence="1">
    <location>
        <position position="100"/>
    </location>
    <ligand>
        <name>substrate</name>
    </ligand>
</feature>
<feature type="binding site" evidence="1">
    <location>
        <position position="107"/>
    </location>
    <ligand>
        <name>NAD(+)</name>
        <dbReference type="ChEBI" id="CHEBI:57540"/>
    </ligand>
</feature>
<feature type="binding site" evidence="1">
    <location>
        <position position="114"/>
    </location>
    <ligand>
        <name>NAD(+)</name>
        <dbReference type="ChEBI" id="CHEBI:57540"/>
    </ligand>
</feature>
<feature type="binding site" evidence="1">
    <location>
        <begin position="131"/>
        <end position="133"/>
    </location>
    <ligand>
        <name>NAD(+)</name>
        <dbReference type="ChEBI" id="CHEBI:57540"/>
    </ligand>
</feature>
<feature type="binding site" evidence="1">
    <location>
        <position position="133"/>
    </location>
    <ligand>
        <name>substrate</name>
    </ligand>
</feature>
<feature type="binding site" evidence="1">
    <location>
        <position position="164"/>
    </location>
    <ligand>
        <name>substrate</name>
    </ligand>
</feature>
<evidence type="ECO:0000255" key="1">
    <source>
        <dbReference type="HAMAP-Rule" id="MF_01517"/>
    </source>
</evidence>
<reference key="1">
    <citation type="journal article" date="1999" name="Science">
        <title>Genome sequence of the radioresistant bacterium Deinococcus radiodurans R1.</title>
        <authorList>
            <person name="White O."/>
            <person name="Eisen J.A."/>
            <person name="Heidelberg J.F."/>
            <person name="Hickey E.K."/>
            <person name="Peterson J.D."/>
            <person name="Dodson R.J."/>
            <person name="Haft D.H."/>
            <person name="Gwinn M.L."/>
            <person name="Nelson W.C."/>
            <person name="Richardson D.L."/>
            <person name="Moffat K.S."/>
            <person name="Qin H."/>
            <person name="Jiang L."/>
            <person name="Pamphile W."/>
            <person name="Crosby M."/>
            <person name="Shen M."/>
            <person name="Vamathevan J.J."/>
            <person name="Lam P."/>
            <person name="McDonald L.A."/>
            <person name="Utterback T.R."/>
            <person name="Zalewski C."/>
            <person name="Makarova K.S."/>
            <person name="Aravind L."/>
            <person name="Daly M.J."/>
            <person name="Minton K.W."/>
            <person name="Fleischmann R.D."/>
            <person name="Ketchum K.A."/>
            <person name="Nelson K.E."/>
            <person name="Salzberg S.L."/>
            <person name="Smith H.O."/>
            <person name="Venter J.C."/>
            <person name="Fraser C.M."/>
        </authorList>
    </citation>
    <scope>NUCLEOTIDE SEQUENCE [LARGE SCALE GENOMIC DNA]</scope>
    <source>
        <strain>ATCC 13939 / DSM 20539 / JCM 16871 / CCUG 27074 / LMG 4051 / NBRC 15346 / NCIMB 9279 / VKM B-1422 / R1</strain>
    </source>
</reference>
<dbReference type="EC" id="1.1.1.37" evidence="1"/>
<dbReference type="EMBL" id="AE000513">
    <property type="protein sequence ID" value="AAF09906.1"/>
    <property type="molecule type" value="Genomic_DNA"/>
</dbReference>
<dbReference type="PIR" id="E75535">
    <property type="entry name" value="E75535"/>
</dbReference>
<dbReference type="RefSeq" id="NP_294048.1">
    <property type="nucleotide sequence ID" value="NC_001263.1"/>
</dbReference>
<dbReference type="RefSeq" id="WP_010886970.1">
    <property type="nucleotide sequence ID" value="NC_001263.1"/>
</dbReference>
<dbReference type="SMR" id="Q9RXI8"/>
<dbReference type="STRING" id="243230.DR_0325"/>
<dbReference type="PaxDb" id="243230-DR_0325"/>
<dbReference type="EnsemblBacteria" id="AAF09906">
    <property type="protein sequence ID" value="AAF09906"/>
    <property type="gene ID" value="DR_0325"/>
</dbReference>
<dbReference type="GeneID" id="69516557"/>
<dbReference type="KEGG" id="dra:DR_0325"/>
<dbReference type="PATRIC" id="fig|243230.17.peg.491"/>
<dbReference type="eggNOG" id="COG0039">
    <property type="taxonomic scope" value="Bacteria"/>
</dbReference>
<dbReference type="HOGENOM" id="CLU_040727_2_0_0"/>
<dbReference type="InParanoid" id="Q9RXI8"/>
<dbReference type="OrthoDB" id="9802969at2"/>
<dbReference type="Proteomes" id="UP000002524">
    <property type="component" value="Chromosome 1"/>
</dbReference>
<dbReference type="GO" id="GO:0030060">
    <property type="term" value="F:L-malate dehydrogenase (NAD+) activity"/>
    <property type="evidence" value="ECO:0000318"/>
    <property type="project" value="GO_Central"/>
</dbReference>
<dbReference type="GO" id="GO:0006108">
    <property type="term" value="P:malate metabolic process"/>
    <property type="evidence" value="ECO:0000318"/>
    <property type="project" value="GO_Central"/>
</dbReference>
<dbReference type="GO" id="GO:0006734">
    <property type="term" value="P:NADH metabolic process"/>
    <property type="evidence" value="ECO:0000318"/>
    <property type="project" value="GO_Central"/>
</dbReference>
<dbReference type="GO" id="GO:0006107">
    <property type="term" value="P:oxaloacetate metabolic process"/>
    <property type="evidence" value="ECO:0000318"/>
    <property type="project" value="GO_Central"/>
</dbReference>
<dbReference type="GO" id="GO:0006099">
    <property type="term" value="P:tricarboxylic acid cycle"/>
    <property type="evidence" value="ECO:0000318"/>
    <property type="project" value="GO_Central"/>
</dbReference>
<dbReference type="CDD" id="cd01338">
    <property type="entry name" value="MDH_chloroplast-like"/>
    <property type="match status" value="1"/>
</dbReference>
<dbReference type="FunFam" id="3.40.50.720:FF:000010">
    <property type="entry name" value="Malate dehydrogenase"/>
    <property type="match status" value="1"/>
</dbReference>
<dbReference type="FunFam" id="3.90.110.10:FF:000002">
    <property type="entry name" value="Malate dehydrogenase"/>
    <property type="match status" value="1"/>
</dbReference>
<dbReference type="Gene3D" id="3.90.110.10">
    <property type="entry name" value="Lactate dehydrogenase/glycoside hydrolase, family 4, C-terminal"/>
    <property type="match status" value="1"/>
</dbReference>
<dbReference type="Gene3D" id="3.40.50.720">
    <property type="entry name" value="NAD(P)-binding Rossmann-like Domain"/>
    <property type="match status" value="1"/>
</dbReference>
<dbReference type="HAMAP" id="MF_01517">
    <property type="entry name" value="Malate_dehydrog_2"/>
    <property type="match status" value="1"/>
</dbReference>
<dbReference type="InterPro" id="IPR001557">
    <property type="entry name" value="L-lactate/malate_DH"/>
</dbReference>
<dbReference type="InterPro" id="IPR022383">
    <property type="entry name" value="Lactate/malate_DH_C"/>
</dbReference>
<dbReference type="InterPro" id="IPR001236">
    <property type="entry name" value="Lactate/malate_DH_N"/>
</dbReference>
<dbReference type="InterPro" id="IPR015955">
    <property type="entry name" value="Lactate_DH/Glyco_Ohase_4_C"/>
</dbReference>
<dbReference type="InterPro" id="IPR010945">
    <property type="entry name" value="Malate_DH_type2"/>
</dbReference>
<dbReference type="InterPro" id="IPR036291">
    <property type="entry name" value="NAD(P)-bd_dom_sf"/>
</dbReference>
<dbReference type="NCBIfam" id="TIGR01759">
    <property type="entry name" value="MalateDH-SF1"/>
    <property type="match status" value="1"/>
</dbReference>
<dbReference type="NCBIfam" id="NF003916">
    <property type="entry name" value="PRK05442.1"/>
    <property type="match status" value="1"/>
</dbReference>
<dbReference type="PANTHER" id="PTHR23382">
    <property type="entry name" value="MALATE DEHYDROGENASE"/>
    <property type="match status" value="1"/>
</dbReference>
<dbReference type="Pfam" id="PF02866">
    <property type="entry name" value="Ldh_1_C"/>
    <property type="match status" value="1"/>
</dbReference>
<dbReference type="Pfam" id="PF00056">
    <property type="entry name" value="Ldh_1_N"/>
    <property type="match status" value="1"/>
</dbReference>
<dbReference type="PIRSF" id="PIRSF000102">
    <property type="entry name" value="Lac_mal_DH"/>
    <property type="match status" value="1"/>
</dbReference>
<dbReference type="SUPFAM" id="SSF56327">
    <property type="entry name" value="LDH C-terminal domain-like"/>
    <property type="match status" value="1"/>
</dbReference>
<dbReference type="SUPFAM" id="SSF51735">
    <property type="entry name" value="NAD(P)-binding Rossmann-fold domains"/>
    <property type="match status" value="1"/>
</dbReference>
<name>MDH_DEIRA</name>
<comment type="function">
    <text evidence="1">Catalyzes the reversible oxidation of malate to oxaloacetate.</text>
</comment>
<comment type="catalytic activity">
    <reaction evidence="1">
        <text>(S)-malate + NAD(+) = oxaloacetate + NADH + H(+)</text>
        <dbReference type="Rhea" id="RHEA:21432"/>
        <dbReference type="ChEBI" id="CHEBI:15378"/>
        <dbReference type="ChEBI" id="CHEBI:15589"/>
        <dbReference type="ChEBI" id="CHEBI:16452"/>
        <dbReference type="ChEBI" id="CHEBI:57540"/>
        <dbReference type="ChEBI" id="CHEBI:57945"/>
        <dbReference type="EC" id="1.1.1.37"/>
    </reaction>
</comment>
<comment type="similarity">
    <text evidence="1">Belongs to the LDH/MDH superfamily. MDH type 2 family.</text>
</comment>